<comment type="function">
    <text evidence="1">Modulates cell-to-cell trafficking.</text>
</comment>
<comment type="subunit">
    <text evidence="10">(Microbial infection) Interacts with Grapevine fanleaf virus (GFLV) 2B-MP.</text>
</comment>
<comment type="subcellular location">
    <subcellularLocation>
        <location evidence="1">Cell membrane</location>
        <topology evidence="1">Single-pass type I membrane protein</topology>
    </subcellularLocation>
    <subcellularLocation>
        <location evidence="5">Cell junction</location>
        <location evidence="5">Plasmodesma</location>
    </subcellularLocation>
    <text evidence="5">Co-localizes with the Grapevine fanleaf virus (GFLV) 2B-MP at the base of tubules within modified plasmodesmata.</text>
</comment>
<comment type="alternative products">
    <event type="alternative splicing"/>
    <isoform>
        <id>Q0WPN8-1</id>
        <name>1</name>
        <sequence type="displayed"/>
    </isoform>
    <isoform>
        <id>Q0WPN8-2</id>
        <name>2</name>
        <sequence type="described" ref="VSP_027133 VSP_027134"/>
    </isoform>
</comment>
<comment type="tissue specificity">
    <text evidence="4">Highly expressed in lateral root and elongation zone.</text>
</comment>
<comment type="similarity">
    <text evidence="9">Belongs to the cysteine-rich repeat secretory protein family. Plasmodesmata-located proteins (PDLD) subfamily.</text>
</comment>
<comment type="caution">
    <text evidence="9">PDLPs were initially named Cysteine-rich secretory proteins based on a classification work that failed to predict the transmembrane region at the C-terminus (PubMed:11402176). However, it was later shown that PDLPs are membrane proteins.</text>
</comment>
<comment type="sequence caution" evidence="9">
    <conflict type="erroneous gene model prediction">
        <sequence resource="EMBL-CDS" id="BAB08312"/>
    </conflict>
</comment>
<proteinExistence type="evidence at protein level"/>
<gene>
    <name evidence="7" type="primary">PDLP7</name>
    <name evidence="6" type="synonym">CRRSP60</name>
    <name type="ordered locus">At5g37660</name>
    <name type="ORF">K12B20.12</name>
</gene>
<dbReference type="EMBL" id="AB018107">
    <property type="protein sequence ID" value="BAB08312.1"/>
    <property type="status" value="ALT_SEQ"/>
    <property type="molecule type" value="Genomic_DNA"/>
</dbReference>
<dbReference type="EMBL" id="CP002688">
    <property type="protein sequence ID" value="AED94215.1"/>
    <property type="molecule type" value="Genomic_DNA"/>
</dbReference>
<dbReference type="EMBL" id="CP002688">
    <property type="protein sequence ID" value="AED94216.1"/>
    <property type="molecule type" value="Genomic_DNA"/>
</dbReference>
<dbReference type="EMBL" id="BT022067">
    <property type="protein sequence ID" value="AAY27054.1"/>
    <property type="molecule type" value="mRNA"/>
</dbReference>
<dbReference type="EMBL" id="AK229025">
    <property type="protein sequence ID" value="BAF00911.1"/>
    <property type="molecule type" value="mRNA"/>
</dbReference>
<dbReference type="RefSeq" id="NP_001078675.1">
    <molecule id="Q0WPN8-1"/>
    <property type="nucleotide sequence ID" value="NM_001085206.1"/>
</dbReference>
<dbReference type="RefSeq" id="NP_198582.2">
    <molecule id="Q0WPN8-2"/>
    <property type="nucleotide sequence ID" value="NM_123125.4"/>
</dbReference>
<dbReference type="SMR" id="Q0WPN8"/>
<dbReference type="BioGRID" id="18995">
    <property type="interactions" value="1"/>
</dbReference>
<dbReference type="FunCoup" id="Q0WPN8">
    <property type="interactions" value="37"/>
</dbReference>
<dbReference type="IntAct" id="Q0WPN8">
    <property type="interactions" value="1"/>
</dbReference>
<dbReference type="STRING" id="3702.Q0WPN8"/>
<dbReference type="TCDB" id="1.I.2.1.1">
    <property type="family name" value="the plant plasmodesmata (ppd) family"/>
</dbReference>
<dbReference type="PaxDb" id="3702-AT5G37660.2"/>
<dbReference type="ProteomicsDB" id="224406">
    <molecule id="Q0WPN8-1"/>
</dbReference>
<dbReference type="EnsemblPlants" id="AT5G37660.1">
    <molecule id="Q0WPN8-2"/>
    <property type="protein sequence ID" value="AT5G37660.1"/>
    <property type="gene ID" value="AT5G37660"/>
</dbReference>
<dbReference type="EnsemblPlants" id="AT5G37660.2">
    <molecule id="Q0WPN8-1"/>
    <property type="protein sequence ID" value="AT5G37660.2"/>
    <property type="gene ID" value="AT5G37660"/>
</dbReference>
<dbReference type="GeneID" id="833744"/>
<dbReference type="Gramene" id="AT5G37660.1">
    <molecule id="Q0WPN8-2"/>
    <property type="protein sequence ID" value="AT5G37660.1"/>
    <property type="gene ID" value="AT5G37660"/>
</dbReference>
<dbReference type="Gramene" id="AT5G37660.2">
    <molecule id="Q0WPN8-1"/>
    <property type="protein sequence ID" value="AT5G37660.2"/>
    <property type="gene ID" value="AT5G37660"/>
</dbReference>
<dbReference type="KEGG" id="ath:AT5G37660"/>
<dbReference type="Araport" id="AT5G37660"/>
<dbReference type="TAIR" id="AT5G37660">
    <property type="gene designation" value="PDLP7"/>
</dbReference>
<dbReference type="eggNOG" id="ENOG502QTDS">
    <property type="taxonomic scope" value="Eukaryota"/>
</dbReference>
<dbReference type="InParanoid" id="Q0WPN8"/>
<dbReference type="OMA" id="AICGGCV"/>
<dbReference type="PhylomeDB" id="Q0WPN8"/>
<dbReference type="PRO" id="PR:Q0WPN8"/>
<dbReference type="Proteomes" id="UP000006548">
    <property type="component" value="Chromosome 5"/>
</dbReference>
<dbReference type="ExpressionAtlas" id="Q0WPN8">
    <property type="expression patterns" value="baseline and differential"/>
</dbReference>
<dbReference type="GO" id="GO:0005886">
    <property type="term" value="C:plasma membrane"/>
    <property type="evidence" value="ECO:0007669"/>
    <property type="project" value="UniProtKB-SubCell"/>
</dbReference>
<dbReference type="GO" id="GO:0009506">
    <property type="term" value="C:plasmodesma"/>
    <property type="evidence" value="ECO:0000314"/>
    <property type="project" value="TAIR"/>
</dbReference>
<dbReference type="CDD" id="cd23509">
    <property type="entry name" value="Gnk2-like"/>
    <property type="match status" value="2"/>
</dbReference>
<dbReference type="FunFam" id="3.30.430.20:FF:000001">
    <property type="entry name" value="cysteine-rich repeat secretory protein 3"/>
    <property type="match status" value="1"/>
</dbReference>
<dbReference type="FunFam" id="3.30.430.20:FF:000020">
    <property type="entry name" value="Cysteine-rich repeat secretory protein 60"/>
    <property type="match status" value="1"/>
</dbReference>
<dbReference type="Gene3D" id="3.30.430.20">
    <property type="entry name" value="Gnk2 domain, C-X8-C-X2-C motif"/>
    <property type="match status" value="2"/>
</dbReference>
<dbReference type="InterPro" id="IPR051378">
    <property type="entry name" value="Cell2Cell_Antifungal"/>
</dbReference>
<dbReference type="InterPro" id="IPR002902">
    <property type="entry name" value="GNK2"/>
</dbReference>
<dbReference type="InterPro" id="IPR038408">
    <property type="entry name" value="GNK2_sf"/>
</dbReference>
<dbReference type="PANTHER" id="PTHR32080">
    <property type="entry name" value="ANTIFUNGAL PROTEIN GINKBILOBIN-2-LIKE"/>
    <property type="match status" value="1"/>
</dbReference>
<dbReference type="PANTHER" id="PTHR32080:SF3">
    <property type="entry name" value="PLASMODESMATA-LOCATED PROTEIN 7"/>
    <property type="match status" value="1"/>
</dbReference>
<dbReference type="Pfam" id="PF01657">
    <property type="entry name" value="Stress-antifung"/>
    <property type="match status" value="2"/>
</dbReference>
<dbReference type="PROSITE" id="PS51473">
    <property type="entry name" value="GNK2"/>
    <property type="match status" value="2"/>
</dbReference>
<organism>
    <name type="scientific">Arabidopsis thaliana</name>
    <name type="common">Mouse-ear cress</name>
    <dbReference type="NCBI Taxonomy" id="3702"/>
    <lineage>
        <taxon>Eukaryota</taxon>
        <taxon>Viridiplantae</taxon>
        <taxon>Streptophyta</taxon>
        <taxon>Embryophyta</taxon>
        <taxon>Tracheophyta</taxon>
        <taxon>Spermatophyta</taxon>
        <taxon>Magnoliopsida</taxon>
        <taxon>eudicotyledons</taxon>
        <taxon>Gunneridae</taxon>
        <taxon>Pentapetalae</taxon>
        <taxon>rosids</taxon>
        <taxon>malvids</taxon>
        <taxon>Brassicales</taxon>
        <taxon>Brassicaceae</taxon>
        <taxon>Camelineae</taxon>
        <taxon>Arabidopsis</taxon>
    </lineage>
</organism>
<feature type="signal peptide" evidence="2">
    <location>
        <begin position="1"/>
        <end position="30"/>
    </location>
</feature>
<feature type="chain" id="PRO_0000296173" description="Plasmodesmata-located protein 7">
    <location>
        <begin position="31"/>
        <end position="298"/>
    </location>
</feature>
<feature type="topological domain" description="Extracellular" evidence="1">
    <location>
        <begin position="31"/>
        <end position="258"/>
    </location>
</feature>
<feature type="transmembrane region" description="Helical" evidence="2">
    <location>
        <begin position="259"/>
        <end position="279"/>
    </location>
</feature>
<feature type="topological domain" description="Cytoplasmic" evidence="1">
    <location>
        <begin position="280"/>
        <end position="298"/>
    </location>
</feature>
<feature type="domain" description="Gnk2-homologous 1" evidence="3">
    <location>
        <begin position="35"/>
        <end position="139"/>
    </location>
</feature>
<feature type="domain" description="Gnk2-homologous 2" evidence="3">
    <location>
        <begin position="140"/>
        <end position="240"/>
    </location>
</feature>
<feature type="region of interest" description="Necessary and sufficient for plasmodesmal targeting" evidence="1">
    <location>
        <begin position="259"/>
        <end position="279"/>
    </location>
</feature>
<feature type="disulfide bond" evidence="3">
    <location>
        <begin position="42"/>
        <end position="117"/>
    </location>
</feature>
<feature type="disulfide bond" evidence="3">
    <location>
        <begin position="93"/>
        <end position="102"/>
    </location>
</feature>
<feature type="disulfide bond" evidence="3">
    <location>
        <begin position="105"/>
        <end position="130"/>
    </location>
</feature>
<feature type="disulfide bond" evidence="3">
    <location>
        <begin position="152"/>
        <end position="218"/>
    </location>
</feature>
<feature type="disulfide bond" evidence="3">
    <location>
        <begin position="194"/>
        <end position="203"/>
    </location>
</feature>
<feature type="disulfide bond" evidence="3">
    <location>
        <begin position="206"/>
        <end position="231"/>
    </location>
</feature>
<feature type="splice variant" id="VSP_027133" description="In isoform 2." evidence="8">
    <original>D</original>
    <variation>K</variation>
    <location>
        <position position="288"/>
    </location>
</feature>
<feature type="splice variant" id="VSP_027134" description="In isoform 2." evidence="8">
    <location>
        <begin position="289"/>
        <end position="298"/>
    </location>
</feature>
<reference key="1">
    <citation type="journal article" date="1999" name="DNA Res.">
        <title>Structural analysis of Arabidopsis thaliana chromosome 5. IX. Sequence features of the regions of 1,011,550 bp covered by seventeen P1 and TAC clones.</title>
        <authorList>
            <person name="Kaneko T."/>
            <person name="Katoh T."/>
            <person name="Sato S."/>
            <person name="Nakamura Y."/>
            <person name="Asamizu E."/>
            <person name="Kotani H."/>
            <person name="Miyajima N."/>
            <person name="Tabata S."/>
        </authorList>
    </citation>
    <scope>NUCLEOTIDE SEQUENCE [LARGE SCALE GENOMIC DNA]</scope>
    <source>
        <strain>cv. Columbia</strain>
    </source>
</reference>
<reference key="2">
    <citation type="journal article" date="2017" name="Plant J.">
        <title>Araport11: a complete reannotation of the Arabidopsis thaliana reference genome.</title>
        <authorList>
            <person name="Cheng C.Y."/>
            <person name="Krishnakumar V."/>
            <person name="Chan A.P."/>
            <person name="Thibaud-Nissen F."/>
            <person name="Schobel S."/>
            <person name="Town C.D."/>
        </authorList>
    </citation>
    <scope>GENOME REANNOTATION</scope>
    <source>
        <strain>cv. Columbia</strain>
    </source>
</reference>
<reference key="3">
    <citation type="submission" date="2005-05" db="EMBL/GenBank/DDBJ databases">
        <title>Arabidopsis cDNA clones.</title>
        <authorList>
            <person name="Shinn P."/>
            <person name="Chen H."/>
            <person name="Cheuk R.F."/>
            <person name="Kim C.J."/>
            <person name="Ecker J.R."/>
        </authorList>
    </citation>
    <scope>NUCLEOTIDE SEQUENCE [LARGE SCALE MRNA] (ISOFORM 2)</scope>
    <source>
        <strain>cv. Columbia</strain>
    </source>
</reference>
<reference key="4">
    <citation type="submission" date="2006-07" db="EMBL/GenBank/DDBJ databases">
        <title>Large-scale analysis of RIKEN Arabidopsis full-length (RAFL) cDNAs.</title>
        <authorList>
            <person name="Totoki Y."/>
            <person name="Seki M."/>
            <person name="Ishida J."/>
            <person name="Nakajima M."/>
            <person name="Enju A."/>
            <person name="Kamiya A."/>
            <person name="Narusaka M."/>
            <person name="Shin-i T."/>
            <person name="Nakagawa M."/>
            <person name="Sakamoto N."/>
            <person name="Oishi K."/>
            <person name="Kohara Y."/>
            <person name="Kobayashi M."/>
            <person name="Toyoda A."/>
            <person name="Sakaki Y."/>
            <person name="Sakurai T."/>
            <person name="Iida K."/>
            <person name="Akiyama K."/>
            <person name="Satou M."/>
            <person name="Toyoda T."/>
            <person name="Konagaya A."/>
            <person name="Carninci P."/>
            <person name="Kawai J."/>
            <person name="Hayashizaki Y."/>
            <person name="Shinozaki K."/>
        </authorList>
    </citation>
    <scope>NUCLEOTIDE SEQUENCE [LARGE SCALE MRNA] (ISOFORM 1)</scope>
    <source>
        <strain>cv. Columbia</strain>
    </source>
</reference>
<reference key="5">
    <citation type="journal article" date="2001" name="Plant Physiol.">
        <title>A superfamily of proteins with novel cysteine-rich repeats.</title>
        <authorList>
            <person name="Chen Z."/>
        </authorList>
    </citation>
    <scope>GENE FAMILY ORGANIZATION</scope>
    <scope>NOMENCLATURE</scope>
    <scope>CAUTION</scope>
</reference>
<reference key="6">
    <citation type="journal article" date="2008" name="Plant Signal. Behav.">
        <title>Symplastic domains in the Arabidopsis shoot apical meristem correlate with PDLP1 expression patterns.</title>
        <authorList>
            <person name="Bayer E."/>
            <person name="Thomas C."/>
            <person name="Maule A."/>
        </authorList>
    </citation>
    <scope>TISSUE SPECIFICITY</scope>
</reference>
<reference key="7">
    <citation type="journal article" date="2010" name="PLoS Pathog.">
        <title>A family of plasmodesmal proteins with receptor-like properties for plant viral movement proteins.</title>
        <authorList>
            <person name="Amari K."/>
            <person name="Boutant E."/>
            <person name="Hofmann C."/>
            <person name="Schmitt-Keichinger C."/>
            <person name="Fernandez-Calvino L."/>
            <person name="Didier P."/>
            <person name="Lerich A."/>
            <person name="Mutterer J."/>
            <person name="Thomas C.L."/>
            <person name="Heinlein M."/>
            <person name="Mely Y."/>
            <person name="Maule A.J."/>
            <person name="Ritzenthaler C."/>
        </authorList>
    </citation>
    <scope>SUBCELLULAR LOCATION</scope>
    <scope>INTERACTION WITH GRAPEVINE FANLEAF VIRUS 2B-MP PROTEIN</scope>
    <source>
        <strain>cv. Columbia</strain>
    </source>
</reference>
<name>PDLP7_ARATH</name>
<keyword id="KW-0025">Alternative splicing</keyword>
<keyword id="KW-0965">Cell junction</keyword>
<keyword id="KW-1003">Cell membrane</keyword>
<keyword id="KW-1015">Disulfide bond</keyword>
<keyword id="KW-0945">Host-virus interaction</keyword>
<keyword id="KW-0472">Membrane</keyword>
<keyword id="KW-1185">Reference proteome</keyword>
<keyword id="KW-0677">Repeat</keyword>
<keyword id="KW-0732">Signal</keyword>
<keyword id="KW-0812">Transmembrane</keyword>
<keyword id="KW-1133">Transmembrane helix</keyword>
<keyword id="KW-0813">Transport</keyword>
<evidence type="ECO:0000250" key="1">
    <source>
        <dbReference type="UniProtKB" id="Q8GXV7"/>
    </source>
</evidence>
<evidence type="ECO:0000255" key="2"/>
<evidence type="ECO:0000255" key="3">
    <source>
        <dbReference type="PROSITE-ProRule" id="PRU00806"/>
    </source>
</evidence>
<evidence type="ECO:0000269" key="4">
    <source>
    </source>
</evidence>
<evidence type="ECO:0000269" key="5">
    <source>
    </source>
</evidence>
<evidence type="ECO:0000303" key="6">
    <source>
    </source>
</evidence>
<evidence type="ECO:0000303" key="7">
    <source>
    </source>
</evidence>
<evidence type="ECO:0000303" key="8">
    <source ref="3"/>
</evidence>
<evidence type="ECO:0000305" key="9"/>
<evidence type="ECO:0000305" key="10">
    <source>
    </source>
</evidence>
<accession>Q0WPN8</accession>
<accession>Q501A0</accession>
<accession>Q9FHQ4</accession>
<protein>
    <recommendedName>
        <fullName>Plasmodesmata-located protein 7</fullName>
        <shortName evidence="7">PD-located protein 7</shortName>
    </recommendedName>
    <alternativeName>
        <fullName evidence="6">Cysteine-rich repeat secretory protein 60</fullName>
    </alternativeName>
</protein>
<sequence>MPMAKLRNIIKTLSIFFFLIAATAPSLSSATSATDTFVFGGCSQQKFSPASAYESNLNSLLTSLVNSATYSSYNNFTIMGSSSSDTARGLFQCRGDLSMPDCATCVARAVSQVGPLCPFTCGGALQLAGCYIKYDNISFLGQEDKTVVLKKCGSSEGYNTDGISRRDAVLTELVNGGGYFRAGGSGDVQGMGQCVGDLTVSECQDCLGTAIGRLKNDCGTAVFGDMFLAKCYARYSTDGAQHYAKSHNYKTNYGGEKTFAIIIGLLAAVVLLIIFLLFLRGVCSRGGDFSILHSFTLI</sequence>